<sequence length="512" mass="57730">MEQPAGLQVDYMFRGVEHAVRVVVSGQVLELEVEDRMTADQWRGEFDANFIEDLTHKTGNFKQFSIFCNMLESALTQSSESVTLDLLTYTDLESLRSRKLGGRPGPCPRSAQLNSKRYLILIYSVEFDRIHYPLPLPYQGKPDPVVLQGIIRSLKEELGHLRGMNGGQDARETEIWHLREQVTRLASEKRELEAQLGRSREEALAGRAARQEAESLRGLVRGLELELRQERGLGGRAAGRRSQDCRRLAKELEEVKASERNLRARLKTLNCELAMYRRGRRTLPAGAREDRALSSRERSTSRGRTATRSSSRESNRGARSHGRPAHPSPSPTGSRVPRFDPTAFVKAKEKKQREIRMKRQQQQQQQRNRMGSGGSGDGPSVSWSHQTRPPAAVTGRGDAANRSRNRSSSVDSFRSRCSSVSSCSELEDFSQSVSKSRRCRGRGKPPSPIPWSGSKTKSTTRERNNHQRHLASSGAWVPIKEYSSDYQGADMAEIDARLKALQEYMNRLDTRS</sequence>
<name>CCD61_RAT</name>
<reference key="1">
    <citation type="journal article" date="2004" name="Genome Res.">
        <title>The status, quality, and expansion of the NIH full-length cDNA project: the Mammalian Gene Collection (MGC).</title>
        <authorList>
            <consortium name="The MGC Project Team"/>
        </authorList>
    </citation>
    <scope>NUCLEOTIDE SEQUENCE [LARGE SCALE MRNA]</scope>
    <source>
        <tissue>Testis</tissue>
    </source>
</reference>
<reference key="2">
    <citation type="journal article" date="2012" name="Nat. Commun.">
        <title>Quantitative maps of protein phosphorylation sites across 14 different rat organs and tissues.</title>
        <authorList>
            <person name="Lundby A."/>
            <person name="Secher A."/>
            <person name="Lage K."/>
            <person name="Nordsborg N.B."/>
            <person name="Dmytriyev A."/>
            <person name="Lundby C."/>
            <person name="Olsen J.V."/>
        </authorList>
    </citation>
    <scope>PHOSPHORYLATION [LARGE SCALE ANALYSIS] AT SER-372 AND SER-375</scope>
    <scope>IDENTIFICATION BY MASS SPECTROMETRY [LARGE SCALE ANALYSIS]</scope>
</reference>
<accession>A0JPP8</accession>
<protein>
    <recommendedName>
        <fullName evidence="1">Centrosomal protein CCDC61</fullName>
    </recommendedName>
    <alternativeName>
        <fullName evidence="1">Coiled-coil domain-containing protein 61</fullName>
    </alternativeName>
    <alternativeName>
        <fullName evidence="1">VFL3 homolog</fullName>
    </alternativeName>
</protein>
<comment type="function">
    <text evidence="1">Microtubule-binding centrosomal protein required for centriole cohesion, independently of the centrosome-associated protein/CEP250 and rootletin/CROCC linker. In interphase, required for anchoring microtubule at the mother centriole subdistal appendages and for centrosome positioning. During mitosis, may be involved in spindle assembly and chromatin alignment by regulating the organization of spindle microtubules into a symmetrical structure. Plays a non-essential role in ciliogenesis.</text>
</comment>
<comment type="subunit">
    <text evidence="1">Forms homodimers (via head domain) (By similarity). Interacts with CEP170 (By similarity). Interacts with PCM1 and CEP131 (By similarity). Binds tubulin (By similarity).</text>
</comment>
<comment type="subcellular location">
    <subcellularLocation>
        <location evidence="1">Cytoplasm</location>
        <location evidence="1">Cytoskeleton</location>
        <location evidence="1">Microtubule organizing center</location>
        <location evidence="1">Centrosome</location>
    </subcellularLocation>
    <subcellularLocation>
        <location evidence="1">Cytoplasm</location>
        <location evidence="1">Cytoskeleton</location>
        <location evidence="1">Microtubule organizing center</location>
        <location evidence="1">Centrosome</location>
        <location evidence="1">Centriolar satellite</location>
    </subcellularLocation>
    <subcellularLocation>
        <location evidence="1">Cytoplasm</location>
        <location evidence="1">Cytoskeleton</location>
        <location evidence="1">Cilium basal body</location>
    </subcellularLocation>
    <text evidence="1">Localization at the centriolar satellite is dependent on intact microtubule network. Localizes at the centriole subdistal appendages and proximal ends. Localized to centrosomal/satellite-like structures with the onset of centrosome separation in early G2.</text>
</comment>
<comment type="domain">
    <text evidence="1">The coiled-coil domains are involved in microtubule-binding.</text>
</comment>
<comment type="miscellaneous">
    <text evidence="1">The N-terminal 3D structure (head domain) resembles that of NHEJ1/XLF, PAXX, SASS6 and XRCC4.</text>
</comment>
<comment type="similarity">
    <text evidence="4">Belongs to the CCDC61 family.</text>
</comment>
<feature type="chain" id="PRO_0000311257" description="Centrosomal protein CCDC61">
    <location>
        <begin position="1"/>
        <end position="512"/>
    </location>
</feature>
<feature type="region of interest" description="Head domain" evidence="1">
    <location>
        <begin position="1"/>
        <end position="142"/>
    </location>
</feature>
<feature type="region of interest" description="Disordered" evidence="3">
    <location>
        <begin position="282"/>
        <end position="415"/>
    </location>
</feature>
<feature type="region of interest" description="Disordered" evidence="3">
    <location>
        <begin position="430"/>
        <end position="472"/>
    </location>
</feature>
<feature type="coiled-coil region" evidence="2">
    <location>
        <begin position="176"/>
        <end position="203"/>
    </location>
</feature>
<feature type="coiled-coil region" evidence="2">
    <location>
        <begin position="246"/>
        <end position="273"/>
    </location>
</feature>
<feature type="compositionally biased region" description="Basic and acidic residues" evidence="3">
    <location>
        <begin position="287"/>
        <end position="300"/>
    </location>
</feature>
<feature type="compositionally biased region" description="Low complexity" evidence="3">
    <location>
        <begin position="406"/>
        <end position="415"/>
    </location>
</feature>
<feature type="modified residue" description="N-acetylmethionine" evidence="1">
    <location>
        <position position="1"/>
    </location>
</feature>
<feature type="modified residue" description="Phosphothreonine" evidence="1">
    <location>
        <position position="282"/>
    </location>
</feature>
<feature type="modified residue" description="Phosphoserine" evidence="1">
    <location>
        <position position="328"/>
    </location>
</feature>
<feature type="modified residue" description="Phosphoserine" evidence="1">
    <location>
        <position position="330"/>
    </location>
</feature>
<feature type="modified residue" description="Phosphoserine" evidence="6">
    <location>
        <position position="372"/>
    </location>
</feature>
<feature type="modified residue" description="Phosphoserine" evidence="6">
    <location>
        <position position="375"/>
    </location>
</feature>
<feature type="modified residue" description="Phosphoserine" evidence="1">
    <location>
        <position position="447"/>
    </location>
</feature>
<feature type="modified residue" description="Phosphoserine" evidence="1">
    <location>
        <position position="473"/>
    </location>
</feature>
<organism>
    <name type="scientific">Rattus norvegicus</name>
    <name type="common">Rat</name>
    <dbReference type="NCBI Taxonomy" id="10116"/>
    <lineage>
        <taxon>Eukaryota</taxon>
        <taxon>Metazoa</taxon>
        <taxon>Chordata</taxon>
        <taxon>Craniata</taxon>
        <taxon>Vertebrata</taxon>
        <taxon>Euteleostomi</taxon>
        <taxon>Mammalia</taxon>
        <taxon>Eutheria</taxon>
        <taxon>Euarchontoglires</taxon>
        <taxon>Glires</taxon>
        <taxon>Rodentia</taxon>
        <taxon>Myomorpha</taxon>
        <taxon>Muroidea</taxon>
        <taxon>Muridae</taxon>
        <taxon>Murinae</taxon>
        <taxon>Rattus</taxon>
    </lineage>
</organism>
<dbReference type="EMBL" id="BC127532">
    <property type="protein sequence ID" value="AAI27533.1"/>
    <property type="molecule type" value="mRNA"/>
</dbReference>
<dbReference type="RefSeq" id="NP_001099699.1">
    <property type="nucleotide sequence ID" value="NM_001106229.1"/>
</dbReference>
<dbReference type="SMR" id="A0JPP8"/>
<dbReference type="FunCoup" id="A0JPP8">
    <property type="interactions" value="1602"/>
</dbReference>
<dbReference type="STRING" id="10116.ENSRNOP00000018495"/>
<dbReference type="iPTMnet" id="A0JPP8"/>
<dbReference type="PhosphoSitePlus" id="A0JPP8"/>
<dbReference type="PaxDb" id="10116-ENSRNOP00000018495"/>
<dbReference type="Ensembl" id="ENSRNOT00000018495.7">
    <property type="protein sequence ID" value="ENSRNOP00000018495.5"/>
    <property type="gene ID" value="ENSRNOG00000013767.7"/>
</dbReference>
<dbReference type="GeneID" id="292680"/>
<dbReference type="KEGG" id="rno:292680"/>
<dbReference type="UCSC" id="RGD:1307390">
    <property type="organism name" value="rat"/>
</dbReference>
<dbReference type="AGR" id="RGD:1307390"/>
<dbReference type="CTD" id="729440"/>
<dbReference type="RGD" id="1307390">
    <property type="gene designation" value="Ccdc61"/>
</dbReference>
<dbReference type="eggNOG" id="ENOG502QRAS">
    <property type="taxonomic scope" value="Eukaryota"/>
</dbReference>
<dbReference type="GeneTree" id="ENSGT00940000154133"/>
<dbReference type="HOGENOM" id="CLU_038746_1_0_1"/>
<dbReference type="InParanoid" id="A0JPP8"/>
<dbReference type="OMA" id="PMKEYSS"/>
<dbReference type="OrthoDB" id="87480at9989"/>
<dbReference type="PhylomeDB" id="A0JPP8"/>
<dbReference type="TreeFam" id="TF329415"/>
<dbReference type="PRO" id="PR:A0JPP8"/>
<dbReference type="Proteomes" id="UP000002494">
    <property type="component" value="Chromosome 1"/>
</dbReference>
<dbReference type="Bgee" id="ENSRNOG00000013767">
    <property type="expression patterns" value="Expressed in thymus and 19 other cell types or tissues"/>
</dbReference>
<dbReference type="GO" id="GO:0034451">
    <property type="term" value="C:centriolar satellite"/>
    <property type="evidence" value="ECO:0000250"/>
    <property type="project" value="UniProtKB"/>
</dbReference>
<dbReference type="GO" id="GO:0120103">
    <property type="term" value="C:centriolar subdistal appendage"/>
    <property type="evidence" value="ECO:0000250"/>
    <property type="project" value="UniProtKB"/>
</dbReference>
<dbReference type="GO" id="GO:0005813">
    <property type="term" value="C:centrosome"/>
    <property type="evidence" value="ECO:0000250"/>
    <property type="project" value="UniProtKB"/>
</dbReference>
<dbReference type="GO" id="GO:0036064">
    <property type="term" value="C:ciliary basal body"/>
    <property type="evidence" value="ECO:0000250"/>
    <property type="project" value="UniProtKB"/>
</dbReference>
<dbReference type="GO" id="GO:0005737">
    <property type="term" value="C:cytoplasm"/>
    <property type="evidence" value="ECO:0007669"/>
    <property type="project" value="UniProtKB-KW"/>
</dbReference>
<dbReference type="GO" id="GO:0005815">
    <property type="term" value="C:microtubule organizing center"/>
    <property type="evidence" value="ECO:0000250"/>
    <property type="project" value="UniProtKB"/>
</dbReference>
<dbReference type="GO" id="GO:0042802">
    <property type="term" value="F:identical protein binding"/>
    <property type="evidence" value="ECO:0000250"/>
    <property type="project" value="UniProtKB"/>
</dbReference>
<dbReference type="GO" id="GO:0008017">
    <property type="term" value="F:microtubule binding"/>
    <property type="evidence" value="ECO:0000266"/>
    <property type="project" value="RGD"/>
</dbReference>
<dbReference type="GO" id="GO:0030030">
    <property type="term" value="P:cell projection organization"/>
    <property type="evidence" value="ECO:0007669"/>
    <property type="project" value="UniProtKB-KW"/>
</dbReference>
<dbReference type="GO" id="GO:0098534">
    <property type="term" value="P:centriole assembly"/>
    <property type="evidence" value="ECO:0000250"/>
    <property type="project" value="UniProtKB"/>
</dbReference>
<dbReference type="GO" id="GO:0090307">
    <property type="term" value="P:mitotic spindle assembly"/>
    <property type="evidence" value="ECO:0000250"/>
    <property type="project" value="UniProtKB"/>
</dbReference>
<dbReference type="CDD" id="cd22284">
    <property type="entry name" value="HD_CCDC61_N"/>
    <property type="match status" value="1"/>
</dbReference>
<dbReference type="InterPro" id="IPR049733">
    <property type="entry name" value="CCDC61_N"/>
</dbReference>
<dbReference type="PANTHER" id="PTHR22691:SF1">
    <property type="entry name" value="CENTROSOMAL PROTEIN CCDC61"/>
    <property type="match status" value="1"/>
</dbReference>
<dbReference type="PANTHER" id="PTHR22691">
    <property type="entry name" value="YEAST SPT2-RELATED"/>
    <property type="match status" value="1"/>
</dbReference>
<keyword id="KW-0007">Acetylation</keyword>
<keyword id="KW-0966">Cell projection</keyword>
<keyword id="KW-0970">Cilium biogenesis/degradation</keyword>
<keyword id="KW-0175">Coiled coil</keyword>
<keyword id="KW-0963">Cytoplasm</keyword>
<keyword id="KW-0206">Cytoskeleton</keyword>
<keyword id="KW-0597">Phosphoprotein</keyword>
<keyword id="KW-1185">Reference proteome</keyword>
<gene>
    <name evidence="5" type="primary">Ccdc61</name>
    <name evidence="1" type="synonym">VFL3</name>
</gene>
<proteinExistence type="evidence at protein level"/>
<evidence type="ECO:0000250" key="1">
    <source>
        <dbReference type="UniProtKB" id="Q9Y6R9"/>
    </source>
</evidence>
<evidence type="ECO:0000255" key="2"/>
<evidence type="ECO:0000256" key="3">
    <source>
        <dbReference type="SAM" id="MobiDB-lite"/>
    </source>
</evidence>
<evidence type="ECO:0000305" key="4"/>
<evidence type="ECO:0000312" key="5">
    <source>
        <dbReference type="RGD" id="1307390"/>
    </source>
</evidence>
<evidence type="ECO:0007744" key="6">
    <source>
    </source>
</evidence>